<gene>
    <name type="primary">nrdI</name>
    <name type="ordered locus">llmg_1542</name>
</gene>
<evidence type="ECO:0000250" key="1"/>
<evidence type="ECO:0000305" key="2"/>
<comment type="function">
    <text evidence="1">Probably involved in ribonucleotide reductase function.</text>
</comment>
<comment type="similarity">
    <text evidence="2">Belongs to the NrdI family.</text>
</comment>
<reference key="1">
    <citation type="journal article" date="1996" name="J. Biol. Chem.">
        <title>The ribonucleotide reductase system of Lactococcus lactis. Characterization of an NrdEF enzyme and a new electron transport protein.</title>
        <authorList>
            <person name="Jordan A."/>
            <person name="Pontis E."/>
            <person name="Aaslund F."/>
            <person name="Hellman U."/>
            <person name="Gibert I."/>
            <person name="Reichard P."/>
        </authorList>
    </citation>
    <scope>NUCLEOTIDE SEQUENCE [GENOMIC DNA]</scope>
</reference>
<reference key="2">
    <citation type="journal article" date="2007" name="J. Bacteriol.">
        <title>The complete genome sequence of the lactic acid bacterial paradigm Lactococcus lactis subsp. cremoris MG1363.</title>
        <authorList>
            <person name="Wegmann U."/>
            <person name="O'Connell-Motherway M."/>
            <person name="Zomer A."/>
            <person name="Buist G."/>
            <person name="Shearman C."/>
            <person name="Canchaya C."/>
            <person name="Ventura M."/>
            <person name="Goesmann A."/>
            <person name="Gasson M.J."/>
            <person name="Kuipers O.P."/>
            <person name="van Sinderen D."/>
            <person name="Kok J."/>
        </authorList>
    </citation>
    <scope>NUCLEOTIDE SEQUENCE [LARGE SCALE GENOMIC DNA]</scope>
    <source>
        <strain>MG1363</strain>
    </source>
</reference>
<organism>
    <name type="scientific">Lactococcus lactis subsp. cremoris (strain MG1363)</name>
    <dbReference type="NCBI Taxonomy" id="416870"/>
    <lineage>
        <taxon>Bacteria</taxon>
        <taxon>Bacillati</taxon>
        <taxon>Bacillota</taxon>
        <taxon>Bacilli</taxon>
        <taxon>Lactobacillales</taxon>
        <taxon>Streptococcaceae</taxon>
        <taxon>Lactococcus</taxon>
        <taxon>Lactococcus cremoris subsp. cremoris</taxon>
    </lineage>
</organism>
<proteinExistence type="inferred from homology"/>
<accession>Q48709</accession>
<accession>A2RLF0</accession>
<name>NRDI_LACLM</name>
<sequence length="140" mass="15666">MKLAYFSVTGQTRRFVSKTDLPNVEITPDDDLEMDEPFLLITPSYAEESPTVSKSIDVMDSVFDFMAYNDNYKHCRGIIGTGNRNFAGIYIFTAKEVSAKYQIPLLYDFEFNGTPADVAAVEKLAAQLDQGAKVTFKNPL</sequence>
<dbReference type="EMBL" id="X92690">
    <property type="protein sequence ID" value="CAA63373.1"/>
    <property type="molecule type" value="Genomic_DNA"/>
</dbReference>
<dbReference type="EMBL" id="AM406671">
    <property type="protein sequence ID" value="CAL98117.1"/>
    <property type="molecule type" value="Genomic_DNA"/>
</dbReference>
<dbReference type="RefSeq" id="WP_011835382.1">
    <property type="nucleotide sequence ID" value="NC_009004.1"/>
</dbReference>
<dbReference type="SMR" id="Q48709"/>
<dbReference type="STRING" id="416870.llmg_1542"/>
<dbReference type="KEGG" id="llm:llmg_1542"/>
<dbReference type="eggNOG" id="COG1780">
    <property type="taxonomic scope" value="Bacteria"/>
</dbReference>
<dbReference type="HOGENOM" id="CLU_114845_2_0_9"/>
<dbReference type="OrthoDB" id="350535at2"/>
<dbReference type="PhylomeDB" id="Q48709"/>
<dbReference type="Proteomes" id="UP000000364">
    <property type="component" value="Chromosome"/>
</dbReference>
<dbReference type="GO" id="GO:0010181">
    <property type="term" value="F:FMN binding"/>
    <property type="evidence" value="ECO:0007669"/>
    <property type="project" value="InterPro"/>
</dbReference>
<dbReference type="GO" id="GO:0036211">
    <property type="term" value="P:protein modification process"/>
    <property type="evidence" value="ECO:0007669"/>
    <property type="project" value="InterPro"/>
</dbReference>
<dbReference type="Gene3D" id="3.40.50.360">
    <property type="match status" value="1"/>
</dbReference>
<dbReference type="HAMAP" id="MF_00128">
    <property type="entry name" value="NrdI"/>
    <property type="match status" value="1"/>
</dbReference>
<dbReference type="InterPro" id="IPR029039">
    <property type="entry name" value="Flavoprotein-like_sf"/>
</dbReference>
<dbReference type="InterPro" id="IPR020852">
    <property type="entry name" value="RNR_Ib_NrdI_bac"/>
</dbReference>
<dbReference type="InterPro" id="IPR004465">
    <property type="entry name" value="RNR_NrdI"/>
</dbReference>
<dbReference type="NCBIfam" id="TIGR00333">
    <property type="entry name" value="nrdI"/>
    <property type="match status" value="1"/>
</dbReference>
<dbReference type="PANTHER" id="PTHR37297">
    <property type="entry name" value="PROTEIN NRDI"/>
    <property type="match status" value="1"/>
</dbReference>
<dbReference type="PANTHER" id="PTHR37297:SF1">
    <property type="entry name" value="PROTEIN NRDI"/>
    <property type="match status" value="1"/>
</dbReference>
<dbReference type="Pfam" id="PF07972">
    <property type="entry name" value="Flavodoxin_NdrI"/>
    <property type="match status" value="1"/>
</dbReference>
<dbReference type="PIRSF" id="PIRSF005087">
    <property type="entry name" value="NrdI"/>
    <property type="match status" value="1"/>
</dbReference>
<dbReference type="SUPFAM" id="SSF52218">
    <property type="entry name" value="Flavoproteins"/>
    <property type="match status" value="1"/>
</dbReference>
<protein>
    <recommendedName>
        <fullName>Protein NrdI</fullName>
    </recommendedName>
</protein>
<feature type="chain" id="PRO_0000164319" description="Protein NrdI">
    <location>
        <begin position="1"/>
        <end position="140"/>
    </location>
</feature>